<keyword id="KW-0028">Amino-acid biosynthesis</keyword>
<keyword id="KW-0378">Hydrolase</keyword>
<keyword id="KW-0486">Methionine biosynthesis</keyword>
<protein>
    <recommendedName>
        <fullName evidence="1">5'-methylthioadenosine/S-adenosylhomocysteine nucleosidase</fullName>
        <shortName evidence="1">MTA/SAH nucleosidase</shortName>
        <shortName evidence="1">MTAN</shortName>
        <ecNumber evidence="1">3.2.2.9</ecNumber>
    </recommendedName>
    <alternativeName>
        <fullName evidence="1">5'-deoxyadenosine nucleosidase</fullName>
        <shortName evidence="1">DOA nucleosidase</shortName>
        <shortName evidence="1">dAdo nucleosidase</shortName>
    </alternativeName>
    <alternativeName>
        <fullName evidence="1">5'-methylthioadenosine nucleosidase</fullName>
        <shortName evidence="1">MTA nucleosidase</shortName>
    </alternativeName>
    <alternativeName>
        <fullName evidence="1">S-adenosylhomocysteine nucleosidase</fullName>
        <shortName evidence="1">AdoHcy nucleosidase</shortName>
        <shortName evidence="1">SAH nucleosidase</shortName>
        <shortName evidence="1">SRH nucleosidase</shortName>
    </alternativeName>
</protein>
<feature type="chain" id="PRO_1000187414" description="5'-methylthioadenosine/S-adenosylhomocysteine nucleosidase">
    <location>
        <begin position="1"/>
        <end position="232"/>
    </location>
</feature>
<feature type="active site" description="Proton acceptor" evidence="1">
    <location>
        <position position="12"/>
    </location>
</feature>
<feature type="active site" description="Proton donor" evidence="1">
    <location>
        <position position="197"/>
    </location>
</feature>
<feature type="binding site" evidence="1">
    <location>
        <position position="78"/>
    </location>
    <ligand>
        <name>substrate</name>
    </ligand>
</feature>
<feature type="binding site" evidence="1">
    <location>
        <position position="152"/>
    </location>
    <ligand>
        <name>substrate</name>
    </ligand>
</feature>
<feature type="binding site" evidence="1">
    <location>
        <begin position="173"/>
        <end position="174"/>
    </location>
    <ligand>
        <name>substrate</name>
    </ligand>
</feature>
<comment type="function">
    <text evidence="1">Catalyzes the irreversible cleavage of the glycosidic bond in both 5'-methylthioadenosine (MTA) and S-adenosylhomocysteine (SAH/AdoHcy) to adenine and the corresponding thioribose, 5'-methylthioribose and S-ribosylhomocysteine, respectively. Also cleaves 5'-deoxyadenosine, a toxic by-product of radical S-adenosylmethionine (SAM) enzymes, into 5-deoxyribose and adenine. Thus, is required for in vivo function of the radical SAM enzymes biotin synthase and lipoic acid synthase, that are inhibited by 5'-deoxyadenosine accumulation.</text>
</comment>
<comment type="catalytic activity">
    <reaction evidence="1">
        <text>S-adenosyl-L-homocysteine + H2O = S-(5-deoxy-D-ribos-5-yl)-L-homocysteine + adenine</text>
        <dbReference type="Rhea" id="RHEA:17805"/>
        <dbReference type="ChEBI" id="CHEBI:15377"/>
        <dbReference type="ChEBI" id="CHEBI:16708"/>
        <dbReference type="ChEBI" id="CHEBI:57856"/>
        <dbReference type="ChEBI" id="CHEBI:58195"/>
        <dbReference type="EC" id="3.2.2.9"/>
    </reaction>
</comment>
<comment type="catalytic activity">
    <reaction evidence="1">
        <text>S-methyl-5'-thioadenosine + H2O = 5-(methylsulfanyl)-D-ribose + adenine</text>
        <dbReference type="Rhea" id="RHEA:13617"/>
        <dbReference type="ChEBI" id="CHEBI:15377"/>
        <dbReference type="ChEBI" id="CHEBI:16708"/>
        <dbReference type="ChEBI" id="CHEBI:17509"/>
        <dbReference type="ChEBI" id="CHEBI:78440"/>
        <dbReference type="EC" id="3.2.2.9"/>
    </reaction>
</comment>
<comment type="catalytic activity">
    <reaction evidence="1">
        <text>5'-deoxyadenosine + H2O = 5-deoxy-D-ribose + adenine</text>
        <dbReference type="Rhea" id="RHEA:29859"/>
        <dbReference type="ChEBI" id="CHEBI:15377"/>
        <dbReference type="ChEBI" id="CHEBI:16708"/>
        <dbReference type="ChEBI" id="CHEBI:17319"/>
        <dbReference type="ChEBI" id="CHEBI:149540"/>
        <dbReference type="EC" id="3.2.2.9"/>
    </reaction>
    <physiologicalReaction direction="left-to-right" evidence="1">
        <dbReference type="Rhea" id="RHEA:29860"/>
    </physiologicalReaction>
</comment>
<comment type="pathway">
    <text evidence="1">Amino-acid biosynthesis; L-methionine biosynthesis via salvage pathway; S-methyl-5-thio-alpha-D-ribose 1-phosphate from S-methyl-5'-thioadenosine (hydrolase route): step 1/2.</text>
</comment>
<comment type="subunit">
    <text evidence="1">Homodimer.</text>
</comment>
<comment type="similarity">
    <text evidence="1">Belongs to the PNP/UDP phosphorylase family. MtnN subfamily.</text>
</comment>
<gene>
    <name evidence="1" type="primary">mtnN</name>
    <name type="ordered locus">BUAP5A_207</name>
</gene>
<accession>B8D909</accession>
<dbReference type="EC" id="3.2.2.9" evidence="1"/>
<dbReference type="EMBL" id="CP001161">
    <property type="protein sequence ID" value="ACL30580.1"/>
    <property type="molecule type" value="Genomic_DNA"/>
</dbReference>
<dbReference type="RefSeq" id="WP_009874168.1">
    <property type="nucleotide sequence ID" value="NC_011833.1"/>
</dbReference>
<dbReference type="SMR" id="B8D909"/>
<dbReference type="KEGG" id="bap:BUAP5A_207"/>
<dbReference type="HOGENOM" id="CLU_031248_2_2_6"/>
<dbReference type="OrthoDB" id="9792278at2"/>
<dbReference type="UniPathway" id="UPA00904">
    <property type="reaction ID" value="UER00871"/>
</dbReference>
<dbReference type="Proteomes" id="UP000006904">
    <property type="component" value="Chromosome"/>
</dbReference>
<dbReference type="GO" id="GO:0005829">
    <property type="term" value="C:cytosol"/>
    <property type="evidence" value="ECO:0007669"/>
    <property type="project" value="TreeGrafter"/>
</dbReference>
<dbReference type="GO" id="GO:0008782">
    <property type="term" value="F:adenosylhomocysteine nucleosidase activity"/>
    <property type="evidence" value="ECO:0007669"/>
    <property type="project" value="UniProtKB-UniRule"/>
</dbReference>
<dbReference type="GO" id="GO:0008930">
    <property type="term" value="F:methylthioadenosine nucleosidase activity"/>
    <property type="evidence" value="ECO:0007669"/>
    <property type="project" value="UniProtKB-UniRule"/>
</dbReference>
<dbReference type="GO" id="GO:0019509">
    <property type="term" value="P:L-methionine salvage from methylthioadenosine"/>
    <property type="evidence" value="ECO:0007669"/>
    <property type="project" value="UniProtKB-UniRule"/>
</dbReference>
<dbReference type="GO" id="GO:0019284">
    <property type="term" value="P:L-methionine salvage from S-adenosylmethionine"/>
    <property type="evidence" value="ECO:0007669"/>
    <property type="project" value="TreeGrafter"/>
</dbReference>
<dbReference type="GO" id="GO:0046124">
    <property type="term" value="P:purine deoxyribonucleoside catabolic process"/>
    <property type="evidence" value="ECO:0007669"/>
    <property type="project" value="UniProtKB-UniRule"/>
</dbReference>
<dbReference type="CDD" id="cd09008">
    <property type="entry name" value="MTAN"/>
    <property type="match status" value="1"/>
</dbReference>
<dbReference type="Gene3D" id="3.40.50.1580">
    <property type="entry name" value="Nucleoside phosphorylase domain"/>
    <property type="match status" value="1"/>
</dbReference>
<dbReference type="HAMAP" id="MF_01684">
    <property type="entry name" value="Salvage_MtnN"/>
    <property type="match status" value="1"/>
</dbReference>
<dbReference type="InterPro" id="IPR010049">
    <property type="entry name" value="MTA_SAH_Nsdase"/>
</dbReference>
<dbReference type="InterPro" id="IPR000845">
    <property type="entry name" value="Nucleoside_phosphorylase_d"/>
</dbReference>
<dbReference type="InterPro" id="IPR035994">
    <property type="entry name" value="Nucleoside_phosphorylase_sf"/>
</dbReference>
<dbReference type="NCBIfam" id="TIGR01704">
    <property type="entry name" value="MTA_SAH-Nsdase"/>
    <property type="match status" value="1"/>
</dbReference>
<dbReference type="NCBIfam" id="NF004079">
    <property type="entry name" value="PRK05584.1"/>
    <property type="match status" value="1"/>
</dbReference>
<dbReference type="PANTHER" id="PTHR46832">
    <property type="entry name" value="5'-METHYLTHIOADENOSINE/S-ADENOSYLHOMOCYSTEINE NUCLEOSIDASE"/>
    <property type="match status" value="1"/>
</dbReference>
<dbReference type="PANTHER" id="PTHR46832:SF1">
    <property type="entry name" value="5'-METHYLTHIOADENOSINE_S-ADENOSYLHOMOCYSTEINE NUCLEOSIDASE"/>
    <property type="match status" value="1"/>
</dbReference>
<dbReference type="Pfam" id="PF01048">
    <property type="entry name" value="PNP_UDP_1"/>
    <property type="match status" value="1"/>
</dbReference>
<dbReference type="SUPFAM" id="SSF53167">
    <property type="entry name" value="Purine and uridine phosphorylases"/>
    <property type="match status" value="1"/>
</dbReference>
<proteinExistence type="inferred from homology"/>
<evidence type="ECO:0000255" key="1">
    <source>
        <dbReference type="HAMAP-Rule" id="MF_01684"/>
    </source>
</evidence>
<name>MTNN_BUCA5</name>
<organism>
    <name type="scientific">Buchnera aphidicola subsp. Acyrthosiphon pisum (strain 5A)</name>
    <dbReference type="NCBI Taxonomy" id="563178"/>
    <lineage>
        <taxon>Bacteria</taxon>
        <taxon>Pseudomonadati</taxon>
        <taxon>Pseudomonadota</taxon>
        <taxon>Gammaproteobacteria</taxon>
        <taxon>Enterobacterales</taxon>
        <taxon>Erwiniaceae</taxon>
        <taxon>Buchnera</taxon>
    </lineage>
</organism>
<reference key="1">
    <citation type="journal article" date="2009" name="Science">
        <title>The dynamics and time scale of ongoing genomic erosion in symbiotic bacteria.</title>
        <authorList>
            <person name="Moran N.A."/>
            <person name="McLaughlin H.J."/>
            <person name="Sorek R."/>
        </authorList>
    </citation>
    <scope>NUCLEOTIDE SEQUENCE [LARGE SCALE GENOMIC DNA]</scope>
    <source>
        <strain>5A</strain>
    </source>
</reference>
<sequence length="232" mass="26266">MKIGIIGAINQETERLKKIIHFYIEKKINTYKIYIGKFKSHDVFLIKSGIGKVSASIATMILIDLYKPDTIINSGSAGSLQSFLKIGDIIIPKKTCYYDVDLTNFGYTRGQIPGYPKEFTVNEKICNFFKKNADKYQLKYIKGLILSGDTFVRENESIKILKKQFPSAIAVEMESSAIAQVCYKFNIPLIIIKSISDASDNNATVNFKENIDIVSYQLSKFVKIILENLIDM</sequence>